<organism>
    <name type="scientific">Thermus thermophilus (strain ATCC 27634 / DSM 579 / HB8)</name>
    <dbReference type="NCBI Taxonomy" id="300852"/>
    <lineage>
        <taxon>Bacteria</taxon>
        <taxon>Thermotogati</taxon>
        <taxon>Deinococcota</taxon>
        <taxon>Deinococci</taxon>
        <taxon>Thermales</taxon>
        <taxon>Thermaceae</taxon>
        <taxon>Thermus</taxon>
    </lineage>
</organism>
<comment type="function">
    <text evidence="2">A gamma subtype methylase, recognizes the double-stranded sequence 5'-TCGA-3', methylates A-4 on both strands and protects the DNA from cleavage by the TthHB8I endonuclease.</text>
</comment>
<comment type="catalytic activity">
    <reaction>
        <text>a 2'-deoxyadenosine in DNA + S-adenosyl-L-methionine = an N(6)-methyl-2'-deoxyadenosine in DNA + S-adenosyl-L-homocysteine + H(+)</text>
        <dbReference type="Rhea" id="RHEA:15197"/>
        <dbReference type="Rhea" id="RHEA-COMP:12418"/>
        <dbReference type="Rhea" id="RHEA-COMP:12419"/>
        <dbReference type="ChEBI" id="CHEBI:15378"/>
        <dbReference type="ChEBI" id="CHEBI:57856"/>
        <dbReference type="ChEBI" id="CHEBI:59789"/>
        <dbReference type="ChEBI" id="CHEBI:90615"/>
        <dbReference type="ChEBI" id="CHEBI:90616"/>
        <dbReference type="EC" id="2.1.1.72"/>
    </reaction>
</comment>
<comment type="similarity">
    <text evidence="4">Belongs to the N(4)/N(6)-methyltransferase family.</text>
</comment>
<keyword id="KW-0238">DNA-binding</keyword>
<keyword id="KW-0489">Methyltransferase</keyword>
<keyword id="KW-1185">Reference proteome</keyword>
<keyword id="KW-0680">Restriction system</keyword>
<keyword id="KW-0949">S-adenosyl-L-methionine</keyword>
<keyword id="KW-0808">Transferase</keyword>
<gene>
    <name evidence="3" type="primary">tthHB8IM</name>
    <name type="ordered locus">TTHA1583</name>
</gene>
<accession>P29749</accession>
<accession>Q5SHZ7</accession>
<sequence length="428" mass="48408">MLFPPSLPPTASGRSLGRVETPPGLVRFMVGLAEAPKGGRVLEPACADGPFLRAFREAHGTGYRFVGVEIDPHALDLPPWAEGVVADFLLWEPGEAFDLILGNPPYGIVGEASKYPIHVLREVKGLYKKTLSTWKGKYNLYGAFIEKSVRLLREGGTLVFVVPATWLVLDDFSLLRSFLAREGRTEVYYLGEVFPGRKVSAVVLRFRKGGKGLALWDTRRDGETFTPLLWSEKPEWKGEIIRFETGWTREMEASGPPLGSLFHIRFAARSPEFKKHPAVQKEPEPGLVPVLTGRNLKPGWIDYESNHSGLWMPKERAKELRDFYATPHLVVAHTKGTKVVAAWDEKAYPWREEFHLLPKEGVELDPLFLVEWLNSDKIQEYVKTLYRDFVPHLTLRMLERIPALLPRKGNTERRKHGPYTSPESAGSF</sequence>
<protein>
    <recommendedName>
        <fullName evidence="2">Type II methyltransferase M.TthHB8I</fullName>
        <shortName evidence="2">M.TthHB8I</shortName>
        <ecNumber>2.1.1.72</ecNumber>
    </recommendedName>
    <alternativeName>
        <fullName>Adenine-specific methyltransferase TthHB8I</fullName>
    </alternativeName>
    <alternativeName>
        <fullName>Modification methylase TthHB8I</fullName>
    </alternativeName>
</protein>
<feature type="chain" id="PRO_0000087981" description="Type II methyltransferase M.TthHB8I">
    <location>
        <begin position="1"/>
        <end position="428"/>
    </location>
</feature>
<feature type="region of interest" description="Disordered" evidence="1">
    <location>
        <begin position="407"/>
        <end position="428"/>
    </location>
</feature>
<feature type="sequence conflict" description="In Ref. 1; AAA27488." evidence="4" ref="1">
    <original>P</original>
    <variation>R</variation>
    <location>
        <position position="36"/>
    </location>
</feature>
<feature type="sequence conflict" description="In Ref. 1; AAA27488." evidence="4" ref="1">
    <original>G</original>
    <variation>V</variation>
    <location>
        <position position="39"/>
    </location>
</feature>
<feature type="sequence conflict" description="In Ref. 1; AAA27488." evidence="4" ref="1">
    <original>R</original>
    <variation>P</variation>
    <location>
        <position position="56"/>
    </location>
</feature>
<feature type="sequence conflict" description="In Ref. 1; AAA27488." evidence="4" ref="1">
    <original>EWKGEII</original>
    <variation>GMEGRDH</variation>
    <location>
        <begin position="235"/>
        <end position="241"/>
    </location>
</feature>
<feature type="sequence conflict" description="In Ref. 1; AAA27488." evidence="4" ref="1">
    <original>R</original>
    <variation>P</variation>
    <location>
        <position position="265"/>
    </location>
</feature>
<reference key="1">
    <citation type="journal article" date="1992" name="Gene">
        <title>Cloning and sequencing of genes encoding the TthHB8I restriction and modification enzymes: comparison with the isoschizomeric TaqI enzymes.</title>
        <authorList>
            <person name="Barany F."/>
            <person name="Danzitz M."/>
            <person name="Zebala J."/>
            <person name="Mayer A."/>
        </authorList>
    </citation>
    <scope>NUCLEOTIDE SEQUENCE [GENOMIC DNA]</scope>
</reference>
<reference key="2">
    <citation type="submission" date="2004-11" db="EMBL/GenBank/DDBJ databases">
        <title>Complete genome sequence of Thermus thermophilus HB8.</title>
        <authorList>
            <person name="Masui R."/>
            <person name="Kurokawa K."/>
            <person name="Nakagawa N."/>
            <person name="Tokunaga F."/>
            <person name="Koyama Y."/>
            <person name="Shibata T."/>
            <person name="Oshima T."/>
            <person name="Yokoyama S."/>
            <person name="Yasunaga T."/>
            <person name="Kuramitsu S."/>
        </authorList>
    </citation>
    <scope>NUCLEOTIDE SEQUENCE [LARGE SCALE GENOMIC DNA]</scope>
    <source>
        <strain>ATCC 27634 / DSM 579 / HB8</strain>
    </source>
</reference>
<reference key="3">
    <citation type="journal article" date="2003" name="Nucleic Acids Res.">
        <title>A nomenclature for restriction enzymes, DNA methyltransferases, homing endonucleases and their genes.</title>
        <authorList>
            <person name="Roberts R.J."/>
            <person name="Belfort M."/>
            <person name="Bestor T."/>
            <person name="Bhagwat A.S."/>
            <person name="Bickle T.A."/>
            <person name="Bitinaite J."/>
            <person name="Blumenthal R.M."/>
            <person name="Degtyarev S.K."/>
            <person name="Dryden D.T."/>
            <person name="Dybvig K."/>
            <person name="Firman K."/>
            <person name="Gromova E.S."/>
            <person name="Gumport R.I."/>
            <person name="Halford S.E."/>
            <person name="Hattman S."/>
            <person name="Heitman J."/>
            <person name="Hornby D.P."/>
            <person name="Janulaitis A."/>
            <person name="Jeltsch A."/>
            <person name="Josephsen J."/>
            <person name="Kiss A."/>
            <person name="Klaenhammer T.R."/>
            <person name="Kobayashi I."/>
            <person name="Kong H."/>
            <person name="Krueger D.H."/>
            <person name="Lacks S."/>
            <person name="Marinus M.G."/>
            <person name="Miyahara M."/>
            <person name="Morgan R.D."/>
            <person name="Murray N.E."/>
            <person name="Nagaraja V."/>
            <person name="Piekarowicz A."/>
            <person name="Pingoud A."/>
            <person name="Raleigh E."/>
            <person name="Rao D.N."/>
            <person name="Reich N."/>
            <person name="Repin V.E."/>
            <person name="Selker E.U."/>
            <person name="Shaw P.C."/>
            <person name="Stein D.C."/>
            <person name="Stoddard B.L."/>
            <person name="Szybalski W."/>
            <person name="Trautner T.A."/>
            <person name="Van Etten J.L."/>
            <person name="Vitor J.M."/>
            <person name="Wilson G.G."/>
            <person name="Xu S.Y."/>
        </authorList>
    </citation>
    <scope>NOMENCLATURE</scope>
    <scope>SUBTYPE</scope>
</reference>
<dbReference type="EC" id="2.1.1.72"/>
<dbReference type="EMBL" id="M74795">
    <property type="protein sequence ID" value="AAA27488.1"/>
    <property type="molecule type" value="Genomic_DNA"/>
</dbReference>
<dbReference type="EMBL" id="AP008226">
    <property type="protein sequence ID" value="BAD71406.1"/>
    <property type="molecule type" value="Genomic_DNA"/>
</dbReference>
<dbReference type="PIR" id="JH0634">
    <property type="entry name" value="JH0634"/>
</dbReference>
<dbReference type="RefSeq" id="WP_011228786.1">
    <property type="nucleotide sequence ID" value="NC_006461.1"/>
</dbReference>
<dbReference type="RefSeq" id="YP_144849.1">
    <property type="nucleotide sequence ID" value="NC_006461.1"/>
</dbReference>
<dbReference type="SMR" id="P29749"/>
<dbReference type="REBASE" id="3523">
    <property type="entry name" value="M.TthHB8I"/>
</dbReference>
<dbReference type="EnsemblBacteria" id="BAD71406">
    <property type="protein sequence ID" value="BAD71406"/>
    <property type="gene ID" value="BAD71406"/>
</dbReference>
<dbReference type="GeneID" id="3169149"/>
<dbReference type="KEGG" id="ttj:TTHA1583"/>
<dbReference type="PATRIC" id="fig|300852.9.peg.1554"/>
<dbReference type="eggNOG" id="COG0732">
    <property type="taxonomic scope" value="Bacteria"/>
</dbReference>
<dbReference type="eggNOG" id="COG0827">
    <property type="taxonomic scope" value="Bacteria"/>
</dbReference>
<dbReference type="HOGENOM" id="CLU_681415_0_0_0"/>
<dbReference type="PhylomeDB" id="P29749"/>
<dbReference type="PRO" id="PR:P29749"/>
<dbReference type="Proteomes" id="UP000000532">
    <property type="component" value="Chromosome"/>
</dbReference>
<dbReference type="GO" id="GO:0003677">
    <property type="term" value="F:DNA binding"/>
    <property type="evidence" value="ECO:0007669"/>
    <property type="project" value="UniProtKB-KW"/>
</dbReference>
<dbReference type="GO" id="GO:0009007">
    <property type="term" value="F:site-specific DNA-methyltransferase (adenine-specific) activity"/>
    <property type="evidence" value="ECO:0007669"/>
    <property type="project" value="UniProtKB-EC"/>
</dbReference>
<dbReference type="GO" id="GO:0009307">
    <property type="term" value="P:DNA restriction-modification system"/>
    <property type="evidence" value="ECO:0007669"/>
    <property type="project" value="UniProtKB-KW"/>
</dbReference>
<dbReference type="GO" id="GO:0032259">
    <property type="term" value="P:methylation"/>
    <property type="evidence" value="ECO:0007669"/>
    <property type="project" value="UniProtKB-KW"/>
</dbReference>
<dbReference type="CDD" id="cd02440">
    <property type="entry name" value="AdoMet_MTases"/>
    <property type="match status" value="1"/>
</dbReference>
<dbReference type="Gene3D" id="3.90.220.10">
    <property type="entry name" value="Adenine-n6-DNA-methyltransferase Taqi, Chain A, domain 2"/>
    <property type="match status" value="1"/>
</dbReference>
<dbReference type="Gene3D" id="3.40.50.150">
    <property type="entry name" value="Vaccinia Virus protein VP39"/>
    <property type="match status" value="1"/>
</dbReference>
<dbReference type="InterPro" id="IPR002052">
    <property type="entry name" value="DNA_methylase_N6_adenine_CS"/>
</dbReference>
<dbReference type="InterPro" id="IPR011639">
    <property type="entry name" value="MethylTrfase_TaqI-like_dom"/>
</dbReference>
<dbReference type="InterPro" id="IPR050953">
    <property type="entry name" value="N4_N6_ade-DNA_methylase"/>
</dbReference>
<dbReference type="InterPro" id="IPR021188">
    <property type="entry name" value="N6_DNA_MeTrfase_TaqI"/>
</dbReference>
<dbReference type="InterPro" id="IPR023135">
    <property type="entry name" value="N6_DNA_MeTrfase_TaqI_C"/>
</dbReference>
<dbReference type="InterPro" id="IPR029063">
    <property type="entry name" value="SAM-dependent_MTases_sf"/>
</dbReference>
<dbReference type="InterPro" id="IPR025931">
    <property type="entry name" value="TaqI_C"/>
</dbReference>
<dbReference type="PANTHER" id="PTHR33841">
    <property type="entry name" value="DNA METHYLTRANSFERASE YEEA-RELATED"/>
    <property type="match status" value="1"/>
</dbReference>
<dbReference type="PANTHER" id="PTHR33841:SF6">
    <property type="entry name" value="TYPE II METHYLTRANSFERASE M.HINDII"/>
    <property type="match status" value="1"/>
</dbReference>
<dbReference type="Pfam" id="PF07669">
    <property type="entry name" value="Eco57I"/>
    <property type="match status" value="1"/>
</dbReference>
<dbReference type="Pfam" id="PF12950">
    <property type="entry name" value="TaqI_C"/>
    <property type="match status" value="1"/>
</dbReference>
<dbReference type="PIRSF" id="PIRSF037236">
    <property type="entry name" value="Ade-sp_methyltransferase_TaqI"/>
    <property type="match status" value="1"/>
</dbReference>
<dbReference type="PRINTS" id="PR00507">
    <property type="entry name" value="N12N6MTFRASE"/>
</dbReference>
<dbReference type="SUPFAM" id="SSF116734">
    <property type="entry name" value="DNA methylase specificity domain"/>
    <property type="match status" value="1"/>
</dbReference>
<dbReference type="SUPFAM" id="SSF53335">
    <property type="entry name" value="S-adenosyl-L-methionine-dependent methyltransferases"/>
    <property type="match status" value="1"/>
</dbReference>
<dbReference type="PROSITE" id="PS00092">
    <property type="entry name" value="N6_MTASE"/>
    <property type="match status" value="1"/>
</dbReference>
<evidence type="ECO:0000256" key="1">
    <source>
        <dbReference type="SAM" id="MobiDB-lite"/>
    </source>
</evidence>
<evidence type="ECO:0000303" key="2">
    <source>
    </source>
</evidence>
<evidence type="ECO:0000303" key="3">
    <source>
    </source>
</evidence>
<evidence type="ECO:0000305" key="4"/>
<proteinExistence type="inferred from homology"/>
<name>MTT8_THET8</name>